<name>DAPD_COXBR</name>
<comment type="catalytic activity">
    <reaction evidence="1">
        <text>(S)-2,3,4,5-tetrahydrodipicolinate + succinyl-CoA + H2O = (S)-2-succinylamino-6-oxoheptanedioate + CoA</text>
        <dbReference type="Rhea" id="RHEA:17325"/>
        <dbReference type="ChEBI" id="CHEBI:15377"/>
        <dbReference type="ChEBI" id="CHEBI:15685"/>
        <dbReference type="ChEBI" id="CHEBI:16845"/>
        <dbReference type="ChEBI" id="CHEBI:57287"/>
        <dbReference type="ChEBI" id="CHEBI:57292"/>
        <dbReference type="EC" id="2.3.1.117"/>
    </reaction>
</comment>
<comment type="pathway">
    <text evidence="1">Amino-acid biosynthesis; L-lysine biosynthesis via DAP pathway; LL-2,6-diaminopimelate from (S)-tetrahydrodipicolinate (succinylase route): step 1/3.</text>
</comment>
<comment type="subunit">
    <text evidence="1">Homotrimer.</text>
</comment>
<comment type="subcellular location">
    <subcellularLocation>
        <location evidence="1">Cytoplasm</location>
    </subcellularLocation>
</comment>
<comment type="similarity">
    <text evidence="1">Belongs to the transferase hexapeptide repeat family.</text>
</comment>
<feature type="chain" id="PRO_1000083749" description="2,3,4,5-tetrahydropyridine-2,6-dicarboxylate N-succinyltransferase">
    <location>
        <begin position="1"/>
        <end position="271"/>
    </location>
</feature>
<feature type="binding site" evidence="1">
    <location>
        <position position="102"/>
    </location>
    <ligand>
        <name>substrate</name>
    </ligand>
</feature>
<feature type="binding site" evidence="1">
    <location>
        <position position="139"/>
    </location>
    <ligand>
        <name>substrate</name>
    </ligand>
</feature>
<organism>
    <name type="scientific">Coxiella burnetii (strain RSA 331 / Henzerling II)</name>
    <dbReference type="NCBI Taxonomy" id="360115"/>
    <lineage>
        <taxon>Bacteria</taxon>
        <taxon>Pseudomonadati</taxon>
        <taxon>Pseudomonadota</taxon>
        <taxon>Gammaproteobacteria</taxon>
        <taxon>Legionellales</taxon>
        <taxon>Coxiellaceae</taxon>
        <taxon>Coxiella</taxon>
    </lineage>
</organism>
<proteinExistence type="inferred from homology"/>
<protein>
    <recommendedName>
        <fullName evidence="1">2,3,4,5-tetrahydropyridine-2,6-dicarboxylate N-succinyltransferase</fullName>
        <ecNumber evidence="1">2.3.1.117</ecNumber>
    </recommendedName>
    <alternativeName>
        <fullName evidence="1">Tetrahydrodipicolinate N-succinyltransferase</fullName>
        <shortName evidence="1">THDP succinyltransferase</shortName>
        <shortName evidence="1">THP succinyltransferase</shortName>
        <shortName evidence="1">Tetrahydropicolinate succinylase</shortName>
    </alternativeName>
</protein>
<accession>A9NCF0</accession>
<keyword id="KW-0012">Acyltransferase</keyword>
<keyword id="KW-0028">Amino-acid biosynthesis</keyword>
<keyword id="KW-0963">Cytoplasm</keyword>
<keyword id="KW-0220">Diaminopimelate biosynthesis</keyword>
<keyword id="KW-0457">Lysine biosynthesis</keyword>
<keyword id="KW-0677">Repeat</keyword>
<keyword id="KW-0808">Transferase</keyword>
<gene>
    <name evidence="1" type="primary">dapD</name>
    <name type="ordered locus">COXBURSA331_A0782</name>
</gene>
<evidence type="ECO:0000255" key="1">
    <source>
        <dbReference type="HAMAP-Rule" id="MF_00811"/>
    </source>
</evidence>
<dbReference type="EC" id="2.3.1.117" evidence="1"/>
<dbReference type="EMBL" id="CP000890">
    <property type="protein sequence ID" value="ABX78839.1"/>
    <property type="molecule type" value="Genomic_DNA"/>
</dbReference>
<dbReference type="RefSeq" id="WP_010957724.1">
    <property type="nucleotide sequence ID" value="NC_010117.1"/>
</dbReference>
<dbReference type="SMR" id="A9NCF0"/>
<dbReference type="KEGG" id="cbs:COXBURSA331_A0782"/>
<dbReference type="HOGENOM" id="CLU_050859_0_1_6"/>
<dbReference type="UniPathway" id="UPA00034">
    <property type="reaction ID" value="UER00019"/>
</dbReference>
<dbReference type="GO" id="GO:0005737">
    <property type="term" value="C:cytoplasm"/>
    <property type="evidence" value="ECO:0007669"/>
    <property type="project" value="UniProtKB-SubCell"/>
</dbReference>
<dbReference type="GO" id="GO:0008666">
    <property type="term" value="F:2,3,4,5-tetrahydropyridine-2,6-dicarboxylate N-succinyltransferase activity"/>
    <property type="evidence" value="ECO:0007669"/>
    <property type="project" value="UniProtKB-UniRule"/>
</dbReference>
<dbReference type="GO" id="GO:0019877">
    <property type="term" value="P:diaminopimelate biosynthetic process"/>
    <property type="evidence" value="ECO:0007669"/>
    <property type="project" value="UniProtKB-UniRule"/>
</dbReference>
<dbReference type="GO" id="GO:0009089">
    <property type="term" value="P:lysine biosynthetic process via diaminopimelate"/>
    <property type="evidence" value="ECO:0007669"/>
    <property type="project" value="UniProtKB-UniRule"/>
</dbReference>
<dbReference type="CDD" id="cd03350">
    <property type="entry name" value="LbH_THP_succinylT"/>
    <property type="match status" value="1"/>
</dbReference>
<dbReference type="Gene3D" id="2.160.10.10">
    <property type="entry name" value="Hexapeptide repeat proteins"/>
    <property type="match status" value="1"/>
</dbReference>
<dbReference type="Gene3D" id="1.10.166.10">
    <property type="entry name" value="Tetrahydrodipicolinate-N-succinyltransferase, N-terminal domain"/>
    <property type="match status" value="1"/>
</dbReference>
<dbReference type="HAMAP" id="MF_00811">
    <property type="entry name" value="DapD"/>
    <property type="match status" value="1"/>
</dbReference>
<dbReference type="InterPro" id="IPR005664">
    <property type="entry name" value="DapD_Trfase_Hexpep_rpt_fam"/>
</dbReference>
<dbReference type="InterPro" id="IPR001451">
    <property type="entry name" value="Hexapep"/>
</dbReference>
<dbReference type="InterPro" id="IPR023180">
    <property type="entry name" value="THP_succinylTrfase_dom1"/>
</dbReference>
<dbReference type="InterPro" id="IPR037133">
    <property type="entry name" value="THP_succinylTrfase_N_sf"/>
</dbReference>
<dbReference type="InterPro" id="IPR050179">
    <property type="entry name" value="Trans_hexapeptide_repeat"/>
</dbReference>
<dbReference type="InterPro" id="IPR011004">
    <property type="entry name" value="Trimer_LpxA-like_sf"/>
</dbReference>
<dbReference type="NCBIfam" id="TIGR00965">
    <property type="entry name" value="dapD"/>
    <property type="match status" value="1"/>
</dbReference>
<dbReference type="NCBIfam" id="NF008808">
    <property type="entry name" value="PRK11830.1"/>
    <property type="match status" value="1"/>
</dbReference>
<dbReference type="PANTHER" id="PTHR43300:SF10">
    <property type="entry name" value="2,3,4,5-TETRAHYDROPYRIDINE-2,6-DICARBOXYLATE N-ACETYLTRANSFERASE"/>
    <property type="match status" value="1"/>
</dbReference>
<dbReference type="PANTHER" id="PTHR43300">
    <property type="entry name" value="ACETYLTRANSFERASE"/>
    <property type="match status" value="1"/>
</dbReference>
<dbReference type="Pfam" id="PF14602">
    <property type="entry name" value="Hexapep_2"/>
    <property type="match status" value="1"/>
</dbReference>
<dbReference type="Pfam" id="PF14805">
    <property type="entry name" value="THDPS_N_2"/>
    <property type="match status" value="1"/>
</dbReference>
<dbReference type="SUPFAM" id="SSF51161">
    <property type="entry name" value="Trimeric LpxA-like enzymes"/>
    <property type="match status" value="1"/>
</dbReference>
<reference key="1">
    <citation type="submission" date="2007-11" db="EMBL/GenBank/DDBJ databases">
        <title>Genome sequencing of phylogenetically and phenotypically diverse Coxiella burnetii isolates.</title>
        <authorList>
            <person name="Seshadri R."/>
            <person name="Samuel J.E."/>
        </authorList>
    </citation>
    <scope>NUCLEOTIDE SEQUENCE [LARGE SCALE GENOMIC DNA]</scope>
    <source>
        <strain>RSA 331 / Henzerling II</strain>
    </source>
</reference>
<sequence length="271" mass="29848">MTDLKTIIEEAYQNKDNFTTDTVPKKIHQAIHQTIELLDNGELRIAEKQNGQWNTNEWAKMAILLYFKTEPLKTFDAGYTFFYDKIPLKYTNNTSQPQSGVRVVPHAIVRKGAYLAPNTVLMPSYINIGAYVDSGTLIDTWATVGSCAQIGKNVHLSGGAGIGGVLEPLQAHPTIIEDDCFIGARSEIVEGVMVEKGSVISMGVFVGQSTPIYNRQTQEITYGRIPAGSVVIPGSLPSKDGHYNRYSAIIVKQVDKKTRSKVSLNELLREG</sequence>